<protein>
    <recommendedName>
        <fullName evidence="1">Beta-ketoacyl-[acyl-carrier-protein] synthase III</fullName>
        <shortName evidence="1">Beta-ketoacyl-ACP synthase III</shortName>
        <shortName evidence="1">KAS III</shortName>
        <ecNumber evidence="1">2.3.1.180</ecNumber>
    </recommendedName>
    <alternativeName>
        <fullName evidence="1">3-oxoacyl-[acyl-carrier-protein] synthase 3</fullName>
    </alternativeName>
    <alternativeName>
        <fullName evidence="1">3-oxoacyl-[acyl-carrier-protein] synthase III</fullName>
    </alternativeName>
</protein>
<sequence length="323" mass="35181">MVFAKISQLAHYAPSQIIKNEDLSLIMDTSDDWISSRTGIKQRHISKNETTADLANKVAEQLIEKSGYSASQIDFIIVATMTPDSMMPSTAARVQAHIGASNAFAFDLSAACSGFVFALSTAEKLISSGSYQKGLVIGAETVSKVLDWTDRGTAVLFGDGAGGVLLEASKEKHFLAESLNTDGSRQGLQSSQVGLNSPFSDEVLDDKFLKMDGRAIFDFAIKEVSKSINHLIETSYLEKEDIDYLFLHQANRRILDKMSRKIDIARDKFPENMMDYGNTSAASIPILLSESYENGLLKLDGNQTILLSGFGGGLTWGSLIVKI</sequence>
<evidence type="ECO:0000255" key="1">
    <source>
        <dbReference type="HAMAP-Rule" id="MF_01815"/>
    </source>
</evidence>
<comment type="function">
    <text evidence="1">Catalyzes the condensation reaction of fatty acid synthesis by the addition to an acyl acceptor of two carbons from malonyl-ACP. Catalyzes the first condensation reaction which initiates fatty acid synthesis and may therefore play a role in governing the total rate of fatty acid production. Possesses both acetoacetyl-ACP synthase and acetyl transacylase activities. Its substrate specificity determines the biosynthesis of branched-chain and/or straight-chain of fatty acids.</text>
</comment>
<comment type="catalytic activity">
    <reaction evidence="1">
        <text>malonyl-[ACP] + acetyl-CoA + H(+) = 3-oxobutanoyl-[ACP] + CO2 + CoA</text>
        <dbReference type="Rhea" id="RHEA:12080"/>
        <dbReference type="Rhea" id="RHEA-COMP:9623"/>
        <dbReference type="Rhea" id="RHEA-COMP:9625"/>
        <dbReference type="ChEBI" id="CHEBI:15378"/>
        <dbReference type="ChEBI" id="CHEBI:16526"/>
        <dbReference type="ChEBI" id="CHEBI:57287"/>
        <dbReference type="ChEBI" id="CHEBI:57288"/>
        <dbReference type="ChEBI" id="CHEBI:78449"/>
        <dbReference type="ChEBI" id="CHEBI:78450"/>
        <dbReference type="EC" id="2.3.1.180"/>
    </reaction>
</comment>
<comment type="pathway">
    <text evidence="1">Lipid metabolism; fatty acid biosynthesis.</text>
</comment>
<comment type="subunit">
    <text evidence="1">Homodimer.</text>
</comment>
<comment type="subcellular location">
    <subcellularLocation>
        <location evidence="1">Cytoplasm</location>
    </subcellularLocation>
</comment>
<comment type="domain">
    <text evidence="1">The last Arg residue of the ACP-binding site is essential for the weak association between ACP/AcpP and FabH.</text>
</comment>
<comment type="similarity">
    <text evidence="1">Belongs to the thiolase-like superfamily. FabH family.</text>
</comment>
<gene>
    <name evidence="1" type="primary">fabH</name>
    <name type="ordered locus">gbs0331</name>
</gene>
<organism>
    <name type="scientific">Streptococcus agalactiae serotype III (strain NEM316)</name>
    <dbReference type="NCBI Taxonomy" id="211110"/>
    <lineage>
        <taxon>Bacteria</taxon>
        <taxon>Bacillati</taxon>
        <taxon>Bacillota</taxon>
        <taxon>Bacilli</taxon>
        <taxon>Lactobacillales</taxon>
        <taxon>Streptococcaceae</taxon>
        <taxon>Streptococcus</taxon>
    </lineage>
</organism>
<dbReference type="EC" id="2.3.1.180" evidence="1"/>
<dbReference type="EMBL" id="AL766844">
    <property type="protein sequence ID" value="CAD45976.1"/>
    <property type="molecule type" value="Genomic_DNA"/>
</dbReference>
<dbReference type="RefSeq" id="WP_000230695.1">
    <property type="nucleotide sequence ID" value="NC_004368.1"/>
</dbReference>
<dbReference type="SMR" id="P64112"/>
<dbReference type="KEGG" id="san:gbs0331"/>
<dbReference type="eggNOG" id="COG0332">
    <property type="taxonomic scope" value="Bacteria"/>
</dbReference>
<dbReference type="HOGENOM" id="CLU_039592_4_1_9"/>
<dbReference type="UniPathway" id="UPA00094"/>
<dbReference type="Proteomes" id="UP000000823">
    <property type="component" value="Chromosome"/>
</dbReference>
<dbReference type="GO" id="GO:0005737">
    <property type="term" value="C:cytoplasm"/>
    <property type="evidence" value="ECO:0007669"/>
    <property type="project" value="UniProtKB-SubCell"/>
</dbReference>
<dbReference type="GO" id="GO:0004315">
    <property type="term" value="F:3-oxoacyl-[acyl-carrier-protein] synthase activity"/>
    <property type="evidence" value="ECO:0007669"/>
    <property type="project" value="InterPro"/>
</dbReference>
<dbReference type="GO" id="GO:0033818">
    <property type="term" value="F:beta-ketoacyl-acyl-carrier-protein synthase III activity"/>
    <property type="evidence" value="ECO:0007669"/>
    <property type="project" value="UniProtKB-UniRule"/>
</dbReference>
<dbReference type="GO" id="GO:0006633">
    <property type="term" value="P:fatty acid biosynthetic process"/>
    <property type="evidence" value="ECO:0007669"/>
    <property type="project" value="UniProtKB-UniRule"/>
</dbReference>
<dbReference type="CDD" id="cd00830">
    <property type="entry name" value="KAS_III"/>
    <property type="match status" value="1"/>
</dbReference>
<dbReference type="Gene3D" id="3.40.47.10">
    <property type="match status" value="1"/>
</dbReference>
<dbReference type="HAMAP" id="MF_01815">
    <property type="entry name" value="FabH"/>
    <property type="match status" value="1"/>
</dbReference>
<dbReference type="InterPro" id="IPR013747">
    <property type="entry name" value="ACP_syn_III_C"/>
</dbReference>
<dbReference type="InterPro" id="IPR013751">
    <property type="entry name" value="ACP_syn_III_N"/>
</dbReference>
<dbReference type="InterPro" id="IPR004655">
    <property type="entry name" value="FabH"/>
</dbReference>
<dbReference type="InterPro" id="IPR016039">
    <property type="entry name" value="Thiolase-like"/>
</dbReference>
<dbReference type="NCBIfam" id="TIGR00747">
    <property type="entry name" value="fabH"/>
    <property type="match status" value="1"/>
</dbReference>
<dbReference type="NCBIfam" id="NF006829">
    <property type="entry name" value="PRK09352.1"/>
    <property type="match status" value="1"/>
</dbReference>
<dbReference type="PANTHER" id="PTHR43091">
    <property type="entry name" value="3-OXOACYL-[ACYL-CARRIER-PROTEIN] SYNTHASE"/>
    <property type="match status" value="1"/>
</dbReference>
<dbReference type="PANTHER" id="PTHR43091:SF1">
    <property type="entry name" value="BETA-KETOACYL-[ACYL-CARRIER-PROTEIN] SYNTHASE III, CHLOROPLASTIC"/>
    <property type="match status" value="1"/>
</dbReference>
<dbReference type="Pfam" id="PF08545">
    <property type="entry name" value="ACP_syn_III"/>
    <property type="match status" value="1"/>
</dbReference>
<dbReference type="Pfam" id="PF08541">
    <property type="entry name" value="ACP_syn_III_C"/>
    <property type="match status" value="1"/>
</dbReference>
<dbReference type="SUPFAM" id="SSF53901">
    <property type="entry name" value="Thiolase-like"/>
    <property type="match status" value="1"/>
</dbReference>
<reference key="1">
    <citation type="journal article" date="2002" name="Mol. Microbiol.">
        <title>Genome sequence of Streptococcus agalactiae, a pathogen causing invasive neonatal disease.</title>
        <authorList>
            <person name="Glaser P."/>
            <person name="Rusniok C."/>
            <person name="Buchrieser C."/>
            <person name="Chevalier F."/>
            <person name="Frangeul L."/>
            <person name="Msadek T."/>
            <person name="Zouine M."/>
            <person name="Couve E."/>
            <person name="Lalioui L."/>
            <person name="Poyart C."/>
            <person name="Trieu-Cuot P."/>
            <person name="Kunst F."/>
        </authorList>
    </citation>
    <scope>NUCLEOTIDE SEQUENCE [LARGE SCALE GENOMIC DNA]</scope>
    <source>
        <strain>NEM316</strain>
    </source>
</reference>
<name>FABH_STRA3</name>
<proteinExistence type="inferred from homology"/>
<keyword id="KW-0012">Acyltransferase</keyword>
<keyword id="KW-0963">Cytoplasm</keyword>
<keyword id="KW-0275">Fatty acid biosynthesis</keyword>
<keyword id="KW-0276">Fatty acid metabolism</keyword>
<keyword id="KW-0444">Lipid biosynthesis</keyword>
<keyword id="KW-0443">Lipid metabolism</keyword>
<keyword id="KW-0511">Multifunctional enzyme</keyword>
<keyword id="KW-0808">Transferase</keyword>
<accession>P64112</accession>
<accession>Q8E1L0</accession>
<accession>Q8E727</accession>
<feature type="chain" id="PRO_0000110479" description="Beta-ketoacyl-[acyl-carrier-protein] synthase III">
    <location>
        <begin position="1"/>
        <end position="323"/>
    </location>
</feature>
<feature type="region of interest" description="ACP-binding" evidence="1">
    <location>
        <begin position="249"/>
        <end position="253"/>
    </location>
</feature>
<feature type="active site" evidence="1">
    <location>
        <position position="112"/>
    </location>
</feature>
<feature type="active site" evidence="1">
    <location>
        <position position="248"/>
    </location>
</feature>
<feature type="active site" evidence="1">
    <location>
        <position position="278"/>
    </location>
</feature>